<dbReference type="EC" id="4.1.1.48" evidence="1"/>
<dbReference type="EMBL" id="BX548174">
    <property type="protein sequence ID" value="CAE19756.1"/>
    <property type="molecule type" value="Genomic_DNA"/>
</dbReference>
<dbReference type="RefSeq" id="WP_011132931.1">
    <property type="nucleotide sequence ID" value="NC_005072.1"/>
</dbReference>
<dbReference type="SMR" id="Q7TU64"/>
<dbReference type="STRING" id="59919.PMM1297"/>
<dbReference type="KEGG" id="pmm:PMM1297"/>
<dbReference type="eggNOG" id="COG0134">
    <property type="taxonomic scope" value="Bacteria"/>
</dbReference>
<dbReference type="HOGENOM" id="CLU_034247_1_0_3"/>
<dbReference type="OrthoDB" id="9804217at2"/>
<dbReference type="UniPathway" id="UPA00035">
    <property type="reaction ID" value="UER00043"/>
</dbReference>
<dbReference type="Proteomes" id="UP000001026">
    <property type="component" value="Chromosome"/>
</dbReference>
<dbReference type="GO" id="GO:0004425">
    <property type="term" value="F:indole-3-glycerol-phosphate synthase activity"/>
    <property type="evidence" value="ECO:0007669"/>
    <property type="project" value="UniProtKB-UniRule"/>
</dbReference>
<dbReference type="GO" id="GO:0004640">
    <property type="term" value="F:phosphoribosylanthranilate isomerase activity"/>
    <property type="evidence" value="ECO:0007669"/>
    <property type="project" value="TreeGrafter"/>
</dbReference>
<dbReference type="GO" id="GO:0000162">
    <property type="term" value="P:L-tryptophan biosynthetic process"/>
    <property type="evidence" value="ECO:0007669"/>
    <property type="project" value="UniProtKB-UniRule"/>
</dbReference>
<dbReference type="CDD" id="cd00331">
    <property type="entry name" value="IGPS"/>
    <property type="match status" value="1"/>
</dbReference>
<dbReference type="FunFam" id="3.20.20.70:FF:000024">
    <property type="entry name" value="Indole-3-glycerol phosphate synthase"/>
    <property type="match status" value="1"/>
</dbReference>
<dbReference type="Gene3D" id="3.20.20.70">
    <property type="entry name" value="Aldolase class I"/>
    <property type="match status" value="1"/>
</dbReference>
<dbReference type="HAMAP" id="MF_00134_B">
    <property type="entry name" value="IGPS_B"/>
    <property type="match status" value="1"/>
</dbReference>
<dbReference type="InterPro" id="IPR013785">
    <property type="entry name" value="Aldolase_TIM"/>
</dbReference>
<dbReference type="InterPro" id="IPR045186">
    <property type="entry name" value="Indole-3-glycerol_P_synth"/>
</dbReference>
<dbReference type="InterPro" id="IPR013798">
    <property type="entry name" value="Indole-3-glycerol_P_synth_dom"/>
</dbReference>
<dbReference type="InterPro" id="IPR001468">
    <property type="entry name" value="Indole-3-GlycerolPSynthase_CS"/>
</dbReference>
<dbReference type="InterPro" id="IPR011060">
    <property type="entry name" value="RibuloseP-bd_barrel"/>
</dbReference>
<dbReference type="NCBIfam" id="NF001372">
    <property type="entry name" value="PRK00278.1-4"/>
    <property type="match status" value="1"/>
</dbReference>
<dbReference type="NCBIfam" id="NF001377">
    <property type="entry name" value="PRK00278.2-4"/>
    <property type="match status" value="1"/>
</dbReference>
<dbReference type="PANTHER" id="PTHR22854:SF2">
    <property type="entry name" value="INDOLE-3-GLYCEROL-PHOSPHATE SYNTHASE"/>
    <property type="match status" value="1"/>
</dbReference>
<dbReference type="PANTHER" id="PTHR22854">
    <property type="entry name" value="TRYPTOPHAN BIOSYNTHESIS PROTEIN"/>
    <property type="match status" value="1"/>
</dbReference>
<dbReference type="Pfam" id="PF00218">
    <property type="entry name" value="IGPS"/>
    <property type="match status" value="1"/>
</dbReference>
<dbReference type="SUPFAM" id="SSF51366">
    <property type="entry name" value="Ribulose-phoshate binding barrel"/>
    <property type="match status" value="1"/>
</dbReference>
<dbReference type="PROSITE" id="PS00614">
    <property type="entry name" value="IGPS"/>
    <property type="match status" value="1"/>
</dbReference>
<name>TRPC_PROMP</name>
<evidence type="ECO:0000255" key="1">
    <source>
        <dbReference type="HAMAP-Rule" id="MF_00134"/>
    </source>
</evidence>
<sequence>MEIRRRPPNPTVRVENLEYAVPHREAKAKNILEEIVWYKDTEIKNFKKIVSLEDLIKKLDKLSPPKDFFQSILHSKIKPGVIAEIKKASPSKGVIREDFKPKEIASCYEKSGASCISVLTDKRFFQGSYEILQDVRTATNLPLLCKDFIISAYQIYKARVSGADAILLIAAILSDDDLFYLKKIADNLKMSVLVEVHDGQELERILSLKSFNLIGINNRNLKTFKTDLKTSIRIMSKYSDIFSKHNIVPISESGINNSDDLKTLNSIGIKGVLIGERFMRESDIENSFKKLFNSI</sequence>
<feature type="chain" id="PRO_1000018526" description="Indole-3-glycerol phosphate synthase">
    <location>
        <begin position="1"/>
        <end position="295"/>
    </location>
</feature>
<proteinExistence type="inferred from homology"/>
<protein>
    <recommendedName>
        <fullName evidence="1">Indole-3-glycerol phosphate synthase</fullName>
        <shortName evidence="1">IGPS</shortName>
        <ecNumber evidence="1">4.1.1.48</ecNumber>
    </recommendedName>
</protein>
<gene>
    <name evidence="1" type="primary">trpC</name>
    <name type="ordered locus">PMM1297</name>
</gene>
<keyword id="KW-0028">Amino-acid biosynthesis</keyword>
<keyword id="KW-0057">Aromatic amino acid biosynthesis</keyword>
<keyword id="KW-0210">Decarboxylase</keyword>
<keyword id="KW-0456">Lyase</keyword>
<keyword id="KW-0822">Tryptophan biosynthesis</keyword>
<accession>Q7TU64</accession>
<reference key="1">
    <citation type="journal article" date="2003" name="Nature">
        <title>Genome divergence in two Prochlorococcus ecotypes reflects oceanic niche differentiation.</title>
        <authorList>
            <person name="Rocap G."/>
            <person name="Larimer F.W."/>
            <person name="Lamerdin J.E."/>
            <person name="Malfatti S."/>
            <person name="Chain P."/>
            <person name="Ahlgren N.A."/>
            <person name="Arellano A."/>
            <person name="Coleman M."/>
            <person name="Hauser L."/>
            <person name="Hess W.R."/>
            <person name="Johnson Z.I."/>
            <person name="Land M.L."/>
            <person name="Lindell D."/>
            <person name="Post A.F."/>
            <person name="Regala W."/>
            <person name="Shah M."/>
            <person name="Shaw S.L."/>
            <person name="Steglich C."/>
            <person name="Sullivan M.B."/>
            <person name="Ting C.S."/>
            <person name="Tolonen A."/>
            <person name="Webb E.A."/>
            <person name="Zinser E.R."/>
            <person name="Chisholm S.W."/>
        </authorList>
    </citation>
    <scope>NUCLEOTIDE SEQUENCE [LARGE SCALE GENOMIC DNA]</scope>
    <source>
        <strain>CCMP1986 / NIES-2087 / MED4</strain>
    </source>
</reference>
<comment type="catalytic activity">
    <reaction evidence="1">
        <text>1-(2-carboxyphenylamino)-1-deoxy-D-ribulose 5-phosphate + H(+) = (1S,2R)-1-C-(indol-3-yl)glycerol 3-phosphate + CO2 + H2O</text>
        <dbReference type="Rhea" id="RHEA:23476"/>
        <dbReference type="ChEBI" id="CHEBI:15377"/>
        <dbReference type="ChEBI" id="CHEBI:15378"/>
        <dbReference type="ChEBI" id="CHEBI:16526"/>
        <dbReference type="ChEBI" id="CHEBI:58613"/>
        <dbReference type="ChEBI" id="CHEBI:58866"/>
        <dbReference type="EC" id="4.1.1.48"/>
    </reaction>
</comment>
<comment type="pathway">
    <text evidence="1">Amino-acid biosynthesis; L-tryptophan biosynthesis; L-tryptophan from chorismate: step 4/5.</text>
</comment>
<comment type="similarity">
    <text evidence="1">Belongs to the TrpC family.</text>
</comment>
<organism>
    <name type="scientific">Prochlorococcus marinus subsp. pastoris (strain CCMP1986 / NIES-2087 / MED4)</name>
    <dbReference type="NCBI Taxonomy" id="59919"/>
    <lineage>
        <taxon>Bacteria</taxon>
        <taxon>Bacillati</taxon>
        <taxon>Cyanobacteriota</taxon>
        <taxon>Cyanophyceae</taxon>
        <taxon>Synechococcales</taxon>
        <taxon>Prochlorococcaceae</taxon>
        <taxon>Prochlorococcus</taxon>
    </lineage>
</organism>